<evidence type="ECO:0000255" key="1">
    <source>
        <dbReference type="HAMAP-Rule" id="MF_00116"/>
    </source>
</evidence>
<feature type="chain" id="PRO_1000094977" description="Deoxyuridine 5'-triphosphate nucleotidohydrolase">
    <location>
        <begin position="1"/>
        <end position="149"/>
    </location>
</feature>
<feature type="binding site" evidence="1">
    <location>
        <begin position="68"/>
        <end position="70"/>
    </location>
    <ligand>
        <name>substrate</name>
    </ligand>
</feature>
<feature type="binding site" evidence="1">
    <location>
        <position position="81"/>
    </location>
    <ligand>
        <name>substrate</name>
    </ligand>
</feature>
<feature type="binding site" evidence="1">
    <location>
        <begin position="85"/>
        <end position="87"/>
    </location>
    <ligand>
        <name>substrate</name>
    </ligand>
</feature>
<feature type="binding site" evidence="1">
    <location>
        <position position="95"/>
    </location>
    <ligand>
        <name>substrate</name>
    </ligand>
</feature>
<reference key="1">
    <citation type="journal article" date="2013" name="Proc. Natl. Acad. Sci. U.S.A.">
        <title>Polynucleobacter necessarius, a model for genome reduction in both free-living and symbiotic bacteria.</title>
        <authorList>
            <person name="Boscaro V."/>
            <person name="Felletti M."/>
            <person name="Vannini C."/>
            <person name="Ackerman M.S."/>
            <person name="Chain P.S."/>
            <person name="Malfatti S."/>
            <person name="Vergez L.M."/>
            <person name="Shin M."/>
            <person name="Doak T.G."/>
            <person name="Lynch M."/>
            <person name="Petroni G."/>
        </authorList>
    </citation>
    <scope>NUCLEOTIDE SEQUENCE [LARGE SCALE GENOMIC DNA]</scope>
    <source>
        <strain>STIR1</strain>
    </source>
</reference>
<gene>
    <name evidence="1" type="primary">dut</name>
    <name type="ordered locus">Pnec_1461</name>
</gene>
<comment type="function">
    <text evidence="1">This enzyme is involved in nucleotide metabolism: it produces dUMP, the immediate precursor of thymidine nucleotides and it decreases the intracellular concentration of dUTP so that uracil cannot be incorporated into DNA.</text>
</comment>
<comment type="catalytic activity">
    <reaction evidence="1">
        <text>dUTP + H2O = dUMP + diphosphate + H(+)</text>
        <dbReference type="Rhea" id="RHEA:10248"/>
        <dbReference type="ChEBI" id="CHEBI:15377"/>
        <dbReference type="ChEBI" id="CHEBI:15378"/>
        <dbReference type="ChEBI" id="CHEBI:33019"/>
        <dbReference type="ChEBI" id="CHEBI:61555"/>
        <dbReference type="ChEBI" id="CHEBI:246422"/>
        <dbReference type="EC" id="3.6.1.23"/>
    </reaction>
</comment>
<comment type="cofactor">
    <cofactor evidence="1">
        <name>Mg(2+)</name>
        <dbReference type="ChEBI" id="CHEBI:18420"/>
    </cofactor>
</comment>
<comment type="pathway">
    <text evidence="1">Pyrimidine metabolism; dUMP biosynthesis; dUMP from dCTP (dUTP route): step 2/2.</text>
</comment>
<comment type="similarity">
    <text evidence="1">Belongs to the dUTPase family.</text>
</comment>
<name>DUT_POLNS</name>
<accession>B1XW28</accession>
<protein>
    <recommendedName>
        <fullName evidence="1">Deoxyuridine 5'-triphosphate nucleotidohydrolase</fullName>
        <shortName evidence="1">dUTPase</shortName>
        <ecNumber evidence="1">3.6.1.23</ecNumber>
    </recommendedName>
    <alternativeName>
        <fullName evidence="1">dUTP pyrophosphatase</fullName>
    </alternativeName>
</protein>
<proteinExistence type="inferred from homology"/>
<sequence length="149" mass="16147">MQSLQVKILDERMRDQLPTYGTPGSAGLDLRACIDEAITIAPGQTVLVPTGLAIYVEDPRYAAFILPRSGLGHKHSIVLGNLVGLIDSDYQGQLMVSTWNRGSTTFKLEPMERLAQLVVMPVQQVELKVVEEFTESSRGAGGFGSTGRA</sequence>
<dbReference type="EC" id="3.6.1.23" evidence="1"/>
<dbReference type="EMBL" id="CP001010">
    <property type="protein sequence ID" value="ACB44555.1"/>
    <property type="molecule type" value="Genomic_DNA"/>
</dbReference>
<dbReference type="SMR" id="B1XW28"/>
<dbReference type="STRING" id="452638.Pnec_1461"/>
<dbReference type="KEGG" id="pne:Pnec_1461"/>
<dbReference type="eggNOG" id="COG0756">
    <property type="taxonomic scope" value="Bacteria"/>
</dbReference>
<dbReference type="HOGENOM" id="CLU_068508_1_1_4"/>
<dbReference type="OrthoDB" id="9809956at2"/>
<dbReference type="UniPathway" id="UPA00610">
    <property type="reaction ID" value="UER00666"/>
</dbReference>
<dbReference type="GO" id="GO:0004170">
    <property type="term" value="F:dUTP diphosphatase activity"/>
    <property type="evidence" value="ECO:0007669"/>
    <property type="project" value="UniProtKB-UniRule"/>
</dbReference>
<dbReference type="GO" id="GO:0000287">
    <property type="term" value="F:magnesium ion binding"/>
    <property type="evidence" value="ECO:0007669"/>
    <property type="project" value="UniProtKB-UniRule"/>
</dbReference>
<dbReference type="GO" id="GO:0006226">
    <property type="term" value="P:dUMP biosynthetic process"/>
    <property type="evidence" value="ECO:0007669"/>
    <property type="project" value="UniProtKB-UniRule"/>
</dbReference>
<dbReference type="GO" id="GO:0046081">
    <property type="term" value="P:dUTP catabolic process"/>
    <property type="evidence" value="ECO:0007669"/>
    <property type="project" value="InterPro"/>
</dbReference>
<dbReference type="CDD" id="cd07557">
    <property type="entry name" value="trimeric_dUTPase"/>
    <property type="match status" value="1"/>
</dbReference>
<dbReference type="FunFam" id="2.70.40.10:FF:000002">
    <property type="entry name" value="dUTP diphosphatase"/>
    <property type="match status" value="1"/>
</dbReference>
<dbReference type="Gene3D" id="2.70.40.10">
    <property type="match status" value="1"/>
</dbReference>
<dbReference type="HAMAP" id="MF_00116">
    <property type="entry name" value="dUTPase_bact"/>
    <property type="match status" value="1"/>
</dbReference>
<dbReference type="InterPro" id="IPR008181">
    <property type="entry name" value="dUTPase"/>
</dbReference>
<dbReference type="InterPro" id="IPR029054">
    <property type="entry name" value="dUTPase-like"/>
</dbReference>
<dbReference type="InterPro" id="IPR036157">
    <property type="entry name" value="dUTPase-like_sf"/>
</dbReference>
<dbReference type="InterPro" id="IPR033704">
    <property type="entry name" value="dUTPase_trimeric"/>
</dbReference>
<dbReference type="NCBIfam" id="TIGR00576">
    <property type="entry name" value="dut"/>
    <property type="match status" value="1"/>
</dbReference>
<dbReference type="NCBIfam" id="NF001862">
    <property type="entry name" value="PRK00601.1"/>
    <property type="match status" value="1"/>
</dbReference>
<dbReference type="PANTHER" id="PTHR11241">
    <property type="entry name" value="DEOXYURIDINE 5'-TRIPHOSPHATE NUCLEOTIDOHYDROLASE"/>
    <property type="match status" value="1"/>
</dbReference>
<dbReference type="PANTHER" id="PTHR11241:SF0">
    <property type="entry name" value="DEOXYURIDINE 5'-TRIPHOSPHATE NUCLEOTIDOHYDROLASE"/>
    <property type="match status" value="1"/>
</dbReference>
<dbReference type="Pfam" id="PF00692">
    <property type="entry name" value="dUTPase"/>
    <property type="match status" value="1"/>
</dbReference>
<dbReference type="SUPFAM" id="SSF51283">
    <property type="entry name" value="dUTPase-like"/>
    <property type="match status" value="1"/>
</dbReference>
<organism>
    <name type="scientific">Polynucleobacter necessarius subsp. necessarius (strain STIR1)</name>
    <dbReference type="NCBI Taxonomy" id="452638"/>
    <lineage>
        <taxon>Bacteria</taxon>
        <taxon>Pseudomonadati</taxon>
        <taxon>Pseudomonadota</taxon>
        <taxon>Betaproteobacteria</taxon>
        <taxon>Burkholderiales</taxon>
        <taxon>Burkholderiaceae</taxon>
        <taxon>Polynucleobacter</taxon>
    </lineage>
</organism>
<keyword id="KW-0378">Hydrolase</keyword>
<keyword id="KW-0460">Magnesium</keyword>
<keyword id="KW-0479">Metal-binding</keyword>
<keyword id="KW-0546">Nucleotide metabolism</keyword>